<protein>
    <recommendedName>
        <fullName>Capsule polysaccharide export protein KpsS</fullName>
    </recommendedName>
</protein>
<sequence length="389" mass="46382">MQGNALTVLLSGKKYLLLQGPMGPFFSDVAEWLESLGRNAVNVVFNGGDRFYCRHRQYLAYYQTPKEFPGWLRDLHRQYDFDTILCFGDCRPLHKEAKRWAKAKGIRFLAFEEGYLRPQFITVEEGGVNAYSSLPRDPDFYRKLPDMPTPHVENLKPSTMKRIGHAMWYYLMGWHYRHEFPRYRHHKSFSPWYEARCWVRAYWRKQLYKVTQRKVLPRLMNELDQRYYLAVLQVYNDSQIRNHSSYNDVRDYINEVMYSFSRKAPKESYLVIKHHPMDRGHRLYRPLIKRLSKEYGLGERILYVHDLPMPELLRHAKAVVTINSTAGISALIHNKPLKVMGNALYDIKGLTYQGHLHQFWQADFKPDMKLFKKFRGYLLVKTQVNAVYY</sequence>
<reference key="1">
    <citation type="journal article" date="1993" name="J. Bacteriol.">
        <title>Molecular analysis of region 1 of the Escherichia coli K5 antigen gene cluster: a region encoding proteins involved in cell surface expression of capsular polysaccharide.</title>
        <authorList>
            <person name="Pazzani C."/>
            <person name="Rosenow C."/>
            <person name="Boulnois G.J."/>
            <person name="Bronner D."/>
            <person name="Jann K."/>
            <person name="Roberts I.S."/>
        </authorList>
    </citation>
    <scope>NUCLEOTIDE SEQUENCE [GENOMIC DNA]</scope>
    <source>
        <strain>K5</strain>
    </source>
</reference>
<reference key="2">
    <citation type="journal article" date="1992" name="J. Bacteriol.">
        <title>Functional analysis of the sialyltransferase complexes in Escherichia coli K1 and K92.</title>
        <authorList>
            <person name="Steenbergen S.M."/>
            <person name="Wrona T.J."/>
            <person name="Vimr E.R."/>
        </authorList>
    </citation>
    <scope>NUCLEOTIDE SEQUENCE [GENOMIC DNA] OF 106-389</scope>
</reference>
<dbReference type="EMBL" id="X74567">
    <property type="protein sequence ID" value="CAA52659.1"/>
    <property type="molecule type" value="Genomic_DNA"/>
</dbReference>
<dbReference type="EMBL" id="M76370">
    <property type="protein sequence ID" value="AAA24214.1"/>
    <property type="molecule type" value="Genomic_DNA"/>
</dbReference>
<dbReference type="PIR" id="S36653">
    <property type="entry name" value="S36653"/>
</dbReference>
<dbReference type="RefSeq" id="WP_001702595.1">
    <property type="nucleotide sequence ID" value="NZ_UGDF01000003.1"/>
</dbReference>
<dbReference type="SMR" id="P42218"/>
<dbReference type="TCDB" id="9.A.41.1.3">
    <property type="family name" value="the capsular polysaccharide exporter (cps-e) family"/>
</dbReference>
<dbReference type="PHI-base" id="PHI:7833"/>
<dbReference type="GO" id="GO:0000271">
    <property type="term" value="P:polysaccharide biosynthetic process"/>
    <property type="evidence" value="ECO:0007669"/>
    <property type="project" value="InterPro"/>
</dbReference>
<dbReference type="GO" id="GO:0015774">
    <property type="term" value="P:polysaccharide transport"/>
    <property type="evidence" value="ECO:0007669"/>
    <property type="project" value="UniProtKB-KW"/>
</dbReference>
<dbReference type="CDD" id="cd16441">
    <property type="entry name" value="beta_Kdo_transferase_KpsS"/>
    <property type="match status" value="1"/>
</dbReference>
<dbReference type="InterPro" id="IPR007833">
    <property type="entry name" value="Capsule_polysaccharide_synth"/>
</dbReference>
<dbReference type="Pfam" id="PF05159">
    <property type="entry name" value="Capsule_synth"/>
    <property type="match status" value="1"/>
</dbReference>
<proteinExistence type="predicted"/>
<accession>P42218</accession>
<accession>Q47402</accession>
<name>KPSS5_ECOLX</name>
<gene>
    <name type="primary">kpsS</name>
</gene>
<evidence type="ECO:0000305" key="1"/>
<organism>
    <name type="scientific">Escherichia coli</name>
    <dbReference type="NCBI Taxonomy" id="562"/>
    <lineage>
        <taxon>Bacteria</taxon>
        <taxon>Pseudomonadati</taxon>
        <taxon>Pseudomonadota</taxon>
        <taxon>Gammaproteobacteria</taxon>
        <taxon>Enterobacterales</taxon>
        <taxon>Enterobacteriaceae</taxon>
        <taxon>Escherichia</taxon>
    </lineage>
</organism>
<feature type="chain" id="PRO_0000084319" description="Capsule polysaccharide export protein KpsS">
    <location>
        <begin position="1"/>
        <end position="389"/>
    </location>
</feature>
<feature type="sequence conflict" description="In Ref. 2; AAA24214." evidence="1" ref="2">
    <original>G</original>
    <variation>D</variation>
    <location>
        <position position="126"/>
    </location>
</feature>
<feature type="sequence conflict" description="In Ref. 2; AAA24214." evidence="1" ref="2">
    <original>S</original>
    <variation>N</variation>
    <location>
        <position position="245"/>
    </location>
</feature>
<feature type="sequence conflict" description="In Ref. 2; AAA24214." evidence="1" ref="2">
    <original>G</original>
    <variation>S</variation>
    <location>
        <position position="298"/>
    </location>
</feature>
<feature type="sequence conflict" description="In Ref. 2; AAA24214." evidence="1" ref="2">
    <original>IL</original>
    <variation>VI</variation>
    <location>
        <begin position="301"/>
        <end position="302"/>
    </location>
</feature>
<feature type="sequence conflict" description="In Ref. 2; AAA24214." evidence="1" ref="2">
    <original>V</original>
    <variation>M</variation>
    <location>
        <position position="380"/>
    </location>
</feature>
<feature type="sequence conflict" description="In Ref. 2; AAA24214." evidence="1" ref="2">
    <original>A</original>
    <variation>W</variation>
    <location>
        <position position="386"/>
    </location>
</feature>
<keyword id="KW-0625">Polysaccharide transport</keyword>
<keyword id="KW-0762">Sugar transport</keyword>
<keyword id="KW-0813">Transport</keyword>